<accession>P29010</accession>
<accession>P21419</accession>
<dbReference type="EMBL" id="X07465">
    <property type="protein sequence ID" value="CAA30352.1"/>
    <property type="molecule type" value="Genomic_DNA"/>
</dbReference>
<dbReference type="EMBL" id="U00096">
    <property type="protein sequence ID" value="AAC74648.1"/>
    <property type="molecule type" value="Genomic_DNA"/>
</dbReference>
<dbReference type="EMBL" id="AP009048">
    <property type="protein sequence ID" value="BAA15280.1"/>
    <property type="molecule type" value="Genomic_DNA"/>
</dbReference>
<dbReference type="PIR" id="B64913">
    <property type="entry name" value="Q3ECD7"/>
</dbReference>
<dbReference type="RefSeq" id="NP_416093.1">
    <property type="nucleotide sequence ID" value="NC_000913.3"/>
</dbReference>
<dbReference type="RefSeq" id="WP_001083297.1">
    <property type="nucleotide sequence ID" value="NZ_LN832404.1"/>
</dbReference>
<dbReference type="BioGRID" id="4260248">
    <property type="interactions" value="170"/>
</dbReference>
<dbReference type="FunCoup" id="P29010">
    <property type="interactions" value="3"/>
</dbReference>
<dbReference type="STRING" id="511145.b1576"/>
<dbReference type="PaxDb" id="511145-b1576"/>
<dbReference type="EnsemblBacteria" id="AAC74648">
    <property type="protein sequence ID" value="AAC74648"/>
    <property type="gene ID" value="b1576"/>
</dbReference>
<dbReference type="GeneID" id="946102"/>
<dbReference type="KEGG" id="ecj:JW1567"/>
<dbReference type="KEGG" id="eco:b1576"/>
<dbReference type="KEGG" id="ecoc:C3026_09075"/>
<dbReference type="PATRIC" id="fig|511145.12.peg.1647"/>
<dbReference type="EchoBASE" id="EB1280"/>
<dbReference type="eggNOG" id="ENOG5033BAK">
    <property type="taxonomic scope" value="Bacteria"/>
</dbReference>
<dbReference type="HOGENOM" id="CLU_192090_1_0_6"/>
<dbReference type="InParanoid" id="P29010"/>
<dbReference type="OMA" id="HRTKQEC"/>
<dbReference type="OrthoDB" id="6420389at2"/>
<dbReference type="BioCyc" id="EcoCyc:EG11303-MONOMER"/>
<dbReference type="PRO" id="PR:P29010"/>
<dbReference type="Proteomes" id="UP000000625">
    <property type="component" value="Chromosome"/>
</dbReference>
<dbReference type="GO" id="GO:0044659">
    <property type="term" value="P:viral release from host cell by cytolysis"/>
    <property type="evidence" value="ECO:0000315"/>
    <property type="project" value="EcoCyc"/>
</dbReference>
<dbReference type="InterPro" id="IPR009954">
    <property type="entry name" value="DUF1482"/>
</dbReference>
<dbReference type="Pfam" id="PF07358">
    <property type="entry name" value="DUF1482"/>
    <property type="match status" value="1"/>
</dbReference>
<keyword id="KW-1185">Reference proteome</keyword>
<reference key="1">
    <citation type="journal article" date="1988" name="Nucleic Acids Res.">
        <title>Identification and sequence of gene dicB: translation of the division inhibitor from an in-phase internal start.</title>
        <authorList>
            <person name="Cam K."/>
            <person name="Bejar S."/>
            <person name="Gil D."/>
            <person name="Bouche J.-P."/>
        </authorList>
    </citation>
    <scope>NUCLEOTIDE SEQUENCE [GENOMIC DNA]</scope>
</reference>
<reference key="2">
    <citation type="journal article" date="1996" name="DNA Res.">
        <title>A 570-kb DNA sequence of the Escherichia coli K-12 genome corresponding to the 28.0-40.1 min region on the linkage map.</title>
        <authorList>
            <person name="Aiba H."/>
            <person name="Baba T."/>
            <person name="Fujita K."/>
            <person name="Hayashi K."/>
            <person name="Inada T."/>
            <person name="Isono K."/>
            <person name="Itoh T."/>
            <person name="Kasai H."/>
            <person name="Kashimoto K."/>
            <person name="Kimura S."/>
            <person name="Kitakawa M."/>
            <person name="Kitagawa M."/>
            <person name="Makino K."/>
            <person name="Miki T."/>
            <person name="Mizobuchi K."/>
            <person name="Mori H."/>
            <person name="Mori T."/>
            <person name="Motomura K."/>
            <person name="Nakade S."/>
            <person name="Nakamura Y."/>
            <person name="Nashimoto H."/>
            <person name="Nishio Y."/>
            <person name="Oshima T."/>
            <person name="Saito N."/>
            <person name="Sampei G."/>
            <person name="Seki Y."/>
            <person name="Sivasundaram S."/>
            <person name="Tagami H."/>
            <person name="Takeda J."/>
            <person name="Takemoto K."/>
            <person name="Takeuchi Y."/>
            <person name="Wada C."/>
            <person name="Yamamoto Y."/>
            <person name="Horiuchi T."/>
        </authorList>
    </citation>
    <scope>NUCLEOTIDE SEQUENCE [LARGE SCALE GENOMIC DNA]</scope>
    <source>
        <strain>K12 / W3110 / ATCC 27325 / DSM 5911</strain>
    </source>
</reference>
<reference key="3">
    <citation type="journal article" date="1997" name="Science">
        <title>The complete genome sequence of Escherichia coli K-12.</title>
        <authorList>
            <person name="Blattner F.R."/>
            <person name="Plunkett G. III"/>
            <person name="Bloch C.A."/>
            <person name="Perna N.T."/>
            <person name="Burland V."/>
            <person name="Riley M."/>
            <person name="Collado-Vides J."/>
            <person name="Glasner J.D."/>
            <person name="Rode C.K."/>
            <person name="Mayhew G.F."/>
            <person name="Gregor J."/>
            <person name="Davis N.W."/>
            <person name="Kirkpatrick H.A."/>
            <person name="Goeden M.A."/>
            <person name="Rose D.J."/>
            <person name="Mau B."/>
            <person name="Shao Y."/>
        </authorList>
    </citation>
    <scope>NUCLEOTIDE SEQUENCE [LARGE SCALE GENOMIC DNA]</scope>
    <source>
        <strain>K12 / MG1655 / ATCC 47076</strain>
    </source>
</reference>
<reference key="4">
    <citation type="journal article" date="2006" name="Mol. Syst. Biol.">
        <title>Highly accurate genome sequences of Escherichia coli K-12 strains MG1655 and W3110.</title>
        <authorList>
            <person name="Hayashi K."/>
            <person name="Morooka N."/>
            <person name="Yamamoto Y."/>
            <person name="Fujita K."/>
            <person name="Isono K."/>
            <person name="Choi S."/>
            <person name="Ohtsubo E."/>
            <person name="Baba T."/>
            <person name="Wanner B.L."/>
            <person name="Mori H."/>
            <person name="Horiuchi T."/>
        </authorList>
    </citation>
    <scope>NUCLEOTIDE SEQUENCE [LARGE SCALE GENOMIC DNA]</scope>
    <source>
        <strain>K12 / W3110 / ATCC 27325 / DSM 5911</strain>
    </source>
</reference>
<proteinExistence type="predicted"/>
<organism>
    <name type="scientific">Escherichia coli (strain K12)</name>
    <dbReference type="NCBI Taxonomy" id="83333"/>
    <lineage>
        <taxon>Bacteria</taxon>
        <taxon>Pseudomonadati</taxon>
        <taxon>Pseudomonadota</taxon>
        <taxon>Gammaproteobacteria</taxon>
        <taxon>Enterobacterales</taxon>
        <taxon>Enterobacteriaceae</taxon>
        <taxon>Escherichia</taxon>
    </lineage>
</organism>
<sequence>MNSAFVLVLTVFLVSGEPVDIAVSVHRTMQECMTAATEQKIPGNCYPVDKVIHQDNIEIPAGL</sequence>
<feature type="chain" id="PRO_0000168955" description="Uncharacterized protein YdfD">
    <location>
        <begin position="1"/>
        <end position="63"/>
    </location>
</feature>
<protein>
    <recommendedName>
        <fullName>Uncharacterized protein YdfD</fullName>
    </recommendedName>
</protein>
<name>YDFD_ECOLI</name>
<gene>
    <name type="primary">ydfD</name>
    <name type="ordered locus">b1576</name>
    <name type="ordered locus">JW1567</name>
</gene>